<sequence length="36" mass="4285">MPNERNIQNYHSTYNNIRDWLGYQKAGEEKAKSTIN</sequence>
<reference key="1">
    <citation type="journal article" date="1995" name="Science">
        <title>Whole-genome random sequencing and assembly of Haemophilus influenzae Rd.</title>
        <authorList>
            <person name="Fleischmann R.D."/>
            <person name="Adams M.D."/>
            <person name="White O."/>
            <person name="Clayton R.A."/>
            <person name="Kirkness E.F."/>
            <person name="Kerlavage A.R."/>
            <person name="Bult C.J."/>
            <person name="Tomb J.-F."/>
            <person name="Dougherty B.A."/>
            <person name="Merrick J.M."/>
            <person name="McKenney K."/>
            <person name="Sutton G.G."/>
            <person name="FitzHugh W."/>
            <person name="Fields C.A."/>
            <person name="Gocayne J.D."/>
            <person name="Scott J.D."/>
            <person name="Shirley R."/>
            <person name="Liu L.-I."/>
            <person name="Glodek A."/>
            <person name="Kelley J.M."/>
            <person name="Weidman J.F."/>
            <person name="Phillips C.A."/>
            <person name="Spriggs T."/>
            <person name="Hedblom E."/>
            <person name="Cotton M.D."/>
            <person name="Utterback T.R."/>
            <person name="Hanna M.C."/>
            <person name="Nguyen D.T."/>
            <person name="Saudek D.M."/>
            <person name="Brandon R.C."/>
            <person name="Fine L.D."/>
            <person name="Fritchman J.L."/>
            <person name="Fuhrmann J.L."/>
            <person name="Geoghagen N.S.M."/>
            <person name="Gnehm C.L."/>
            <person name="McDonald L.A."/>
            <person name="Small K.V."/>
            <person name="Fraser C.M."/>
            <person name="Smith H.O."/>
            <person name="Venter J.C."/>
        </authorList>
    </citation>
    <scope>NUCLEOTIDE SEQUENCE [LARGE SCALE GENOMIC DNA]</scope>
    <source>
        <strain>ATCC 51907 / DSM 11121 / KW20 / Rd</strain>
    </source>
</reference>
<keyword id="KW-1185">Reference proteome</keyword>
<accession>P44281</accession>
<feature type="chain" id="PRO_0000078103" description="Uncharacterized protein HI_1650">
    <location>
        <begin position="1"/>
        <end position="36"/>
    </location>
</feature>
<dbReference type="EMBL" id="L42023">
    <property type="protein sequence ID" value="AAC23303.1"/>
    <property type="molecule type" value="Genomic_DNA"/>
</dbReference>
<dbReference type="PIR" id="C64039">
    <property type="entry name" value="C64039"/>
</dbReference>
<dbReference type="RefSeq" id="NP_439792.1">
    <property type="nucleotide sequence ID" value="NC_000907.1"/>
</dbReference>
<dbReference type="SMR" id="P44281"/>
<dbReference type="STRING" id="71421.HI_1650"/>
<dbReference type="EnsemblBacteria" id="AAC23303">
    <property type="protein sequence ID" value="AAC23303"/>
    <property type="gene ID" value="HI_1650"/>
</dbReference>
<dbReference type="KEGG" id="hin:HI_1650"/>
<dbReference type="PATRIC" id="fig|71421.8.peg.1726"/>
<dbReference type="HOGENOM" id="CLU_3356486_0_0_6"/>
<dbReference type="OrthoDB" id="9758243at2"/>
<dbReference type="BioCyc" id="HINF71421:G1GJ1-1667-MONOMER"/>
<dbReference type="Proteomes" id="UP000000579">
    <property type="component" value="Chromosome"/>
</dbReference>
<dbReference type="Gene3D" id="1.20.58.2040">
    <property type="match status" value="1"/>
</dbReference>
<gene>
    <name type="ordered locus">HI_1650</name>
</gene>
<name>Y1650_HAEIN</name>
<protein>
    <recommendedName>
        <fullName>Uncharacterized protein HI_1650</fullName>
    </recommendedName>
</protein>
<organism>
    <name type="scientific">Haemophilus influenzae (strain ATCC 51907 / DSM 11121 / KW20 / Rd)</name>
    <dbReference type="NCBI Taxonomy" id="71421"/>
    <lineage>
        <taxon>Bacteria</taxon>
        <taxon>Pseudomonadati</taxon>
        <taxon>Pseudomonadota</taxon>
        <taxon>Gammaproteobacteria</taxon>
        <taxon>Pasteurellales</taxon>
        <taxon>Pasteurellaceae</taxon>
        <taxon>Haemophilus</taxon>
    </lineage>
</organism>
<proteinExistence type="predicted"/>